<dbReference type="EMBL" id="AE005174">
    <property type="protein sequence ID" value="AAG54545.1"/>
    <property type="molecule type" value="Genomic_DNA"/>
</dbReference>
<dbReference type="EMBL" id="BA000007">
    <property type="protein sequence ID" value="BAB33670.2"/>
    <property type="status" value="ALT_INIT"/>
    <property type="molecule type" value="Genomic_DNA"/>
</dbReference>
<dbReference type="PIR" id="E85510">
    <property type="entry name" value="E85510"/>
</dbReference>
<dbReference type="PIR" id="G90659">
    <property type="entry name" value="G90659"/>
</dbReference>
<dbReference type="RefSeq" id="NP_308274.1">
    <property type="nucleotide sequence ID" value="NC_002695.1"/>
</dbReference>
<dbReference type="SMR" id="P0AD60"/>
<dbReference type="STRING" id="155864.Z0277"/>
<dbReference type="GeneID" id="914333"/>
<dbReference type="KEGG" id="ece:Z0277"/>
<dbReference type="KEGG" id="ecs:ECs_0247"/>
<dbReference type="PATRIC" id="fig|386585.9.peg.347"/>
<dbReference type="eggNOG" id="ENOG50305HJ">
    <property type="taxonomic scope" value="Bacteria"/>
</dbReference>
<dbReference type="HOGENOM" id="CLU_109262_0_0_6"/>
<dbReference type="OMA" id="DCAAQNI"/>
<dbReference type="Proteomes" id="UP000000558">
    <property type="component" value="Chromosome"/>
</dbReference>
<dbReference type="Proteomes" id="UP000002519">
    <property type="component" value="Chromosome"/>
</dbReference>
<dbReference type="GO" id="GO:0042597">
    <property type="term" value="C:periplasmic space"/>
    <property type="evidence" value="ECO:0007669"/>
    <property type="project" value="UniProtKB-SubCell"/>
</dbReference>
<dbReference type="FunFam" id="3.40.1420.10:FF:000001">
    <property type="entry name" value="Inhibitor of vertebrate lysozyme"/>
    <property type="match status" value="1"/>
</dbReference>
<dbReference type="Gene3D" id="3.40.1420.10">
    <property type="entry name" value="Inhibitor of vertebrate lysozyme"/>
    <property type="match status" value="1"/>
</dbReference>
<dbReference type="InterPro" id="IPR036501">
    <property type="entry name" value="Inhibitor_vert_lysozyme_sf"/>
</dbReference>
<dbReference type="InterPro" id="IPR014453">
    <property type="entry name" value="Inhibitor_vertebrate_lysozyme"/>
</dbReference>
<dbReference type="NCBIfam" id="NF007443">
    <property type="entry name" value="PRK09993.1"/>
    <property type="match status" value="1"/>
</dbReference>
<dbReference type="Pfam" id="PF08816">
    <property type="entry name" value="Ivy"/>
    <property type="match status" value="1"/>
</dbReference>
<dbReference type="PIRSF" id="PIRSF009103">
    <property type="entry name" value="Ivy"/>
    <property type="match status" value="1"/>
</dbReference>
<dbReference type="SUPFAM" id="SSF89872">
    <property type="entry name" value="Inhibitor of vertebrate lysozyme, Ivy"/>
    <property type="match status" value="1"/>
</dbReference>
<evidence type="ECO:0000250" key="1"/>
<evidence type="ECO:0000255" key="2"/>
<evidence type="ECO:0000305" key="3"/>
<name>IVY_ECO57</name>
<gene>
    <name type="primary">ivy</name>
    <name type="ordered locus">Z0277</name>
    <name type="ordered locus">ECs0247</name>
</gene>
<proteinExistence type="inferred from homology"/>
<comment type="function">
    <text evidence="1">Strong inhibitor of lysozyme C.</text>
</comment>
<comment type="subunit">
    <text evidence="1">Homodimer.</text>
</comment>
<comment type="subcellular location">
    <subcellularLocation>
        <location evidence="1">Periplasm</location>
    </subcellularLocation>
</comment>
<comment type="similarity">
    <text evidence="3">Belongs to the ivy family.</text>
</comment>
<comment type="sequence caution" evidence="3">
    <conflict type="erroneous initiation">
        <sequence resource="EMBL-CDS" id="BAB33670"/>
    </conflict>
    <text>Truncated N-terminus.</text>
</comment>
<reference key="1">
    <citation type="journal article" date="2001" name="Nature">
        <title>Genome sequence of enterohaemorrhagic Escherichia coli O157:H7.</title>
        <authorList>
            <person name="Perna N.T."/>
            <person name="Plunkett G. III"/>
            <person name="Burland V."/>
            <person name="Mau B."/>
            <person name="Glasner J.D."/>
            <person name="Rose D.J."/>
            <person name="Mayhew G.F."/>
            <person name="Evans P.S."/>
            <person name="Gregor J."/>
            <person name="Kirkpatrick H.A."/>
            <person name="Posfai G."/>
            <person name="Hackett J."/>
            <person name="Klink S."/>
            <person name="Boutin A."/>
            <person name="Shao Y."/>
            <person name="Miller L."/>
            <person name="Grotbeck E.J."/>
            <person name="Davis N.W."/>
            <person name="Lim A."/>
            <person name="Dimalanta E.T."/>
            <person name="Potamousis K."/>
            <person name="Apodaca J."/>
            <person name="Anantharaman T.S."/>
            <person name="Lin J."/>
            <person name="Yen G."/>
            <person name="Schwartz D.C."/>
            <person name="Welch R.A."/>
            <person name="Blattner F.R."/>
        </authorList>
    </citation>
    <scope>NUCLEOTIDE SEQUENCE [LARGE SCALE GENOMIC DNA]</scope>
    <source>
        <strain>O157:H7 / EDL933 / ATCC 700927 / EHEC</strain>
    </source>
</reference>
<reference key="2">
    <citation type="journal article" date="2001" name="DNA Res.">
        <title>Complete genome sequence of enterohemorrhagic Escherichia coli O157:H7 and genomic comparison with a laboratory strain K-12.</title>
        <authorList>
            <person name="Hayashi T."/>
            <person name="Makino K."/>
            <person name="Ohnishi M."/>
            <person name="Kurokawa K."/>
            <person name="Ishii K."/>
            <person name="Yokoyama K."/>
            <person name="Han C.-G."/>
            <person name="Ohtsubo E."/>
            <person name="Nakayama K."/>
            <person name="Murata T."/>
            <person name="Tanaka M."/>
            <person name="Tobe T."/>
            <person name="Iida T."/>
            <person name="Takami H."/>
            <person name="Honda T."/>
            <person name="Sasakawa C."/>
            <person name="Ogasawara N."/>
            <person name="Yasunaga T."/>
            <person name="Kuhara S."/>
            <person name="Shiba T."/>
            <person name="Hattori M."/>
            <person name="Shinagawa H."/>
        </authorList>
    </citation>
    <scope>NUCLEOTIDE SEQUENCE [LARGE SCALE GENOMIC DNA]</scope>
    <source>
        <strain>O157:H7 / Sakai / RIMD 0509952 / EHEC</strain>
    </source>
</reference>
<feature type="signal peptide" evidence="2">
    <location>
        <begin position="1"/>
        <end position="28"/>
    </location>
</feature>
<feature type="chain" id="PRO_0000043361" description="Inhibitor of vertebrate lysozyme">
    <location>
        <begin position="29"/>
        <end position="157"/>
    </location>
</feature>
<feature type="disulfide bond" evidence="1">
    <location>
        <begin position="85"/>
        <end position="90"/>
    </location>
</feature>
<accession>P0AD60</accession>
<accession>P45502</accession>
<accession>P77185</accession>
<keyword id="KW-1015">Disulfide bond</keyword>
<keyword id="KW-0574">Periplasm</keyword>
<keyword id="KW-1185">Reference proteome</keyword>
<keyword id="KW-0732">Signal</keyword>
<sequence length="157" mass="16872">MGRISSGGMMFKAITTVAALVIATSAMAQDDLTISSLAKGETTKAAFNQMVQGHKLPAWVMKGGTYTPAQTVTLGDETYQVMSACKPHDCGSQRIAVMWSEKSNQMTGLFSTIDEKTSQEKLTWLNVNDALSIDGKTVLFAALTGSLENHPDGFNFK</sequence>
<organism>
    <name type="scientific">Escherichia coli O157:H7</name>
    <dbReference type="NCBI Taxonomy" id="83334"/>
    <lineage>
        <taxon>Bacteria</taxon>
        <taxon>Pseudomonadati</taxon>
        <taxon>Pseudomonadota</taxon>
        <taxon>Gammaproteobacteria</taxon>
        <taxon>Enterobacterales</taxon>
        <taxon>Enterobacteriaceae</taxon>
        <taxon>Escherichia</taxon>
    </lineage>
</organism>
<protein>
    <recommendedName>
        <fullName>Inhibitor of vertebrate lysozyme</fullName>
    </recommendedName>
</protein>